<name>MENH_CITK8</name>
<comment type="function">
    <text evidence="1">Catalyzes a proton abstraction reaction that results in 2,5-elimination of pyruvate from 2-succinyl-5-enolpyruvyl-6-hydroxy-3-cyclohexene-1-carboxylate (SEPHCHC) and the formation of 2-succinyl-6-hydroxy-2,4-cyclohexadiene-1-carboxylate (SHCHC).</text>
</comment>
<comment type="catalytic activity">
    <reaction evidence="1">
        <text>5-enolpyruvoyl-6-hydroxy-2-succinyl-cyclohex-3-ene-1-carboxylate = (1R,6R)-6-hydroxy-2-succinyl-cyclohexa-2,4-diene-1-carboxylate + pyruvate</text>
        <dbReference type="Rhea" id="RHEA:25597"/>
        <dbReference type="ChEBI" id="CHEBI:15361"/>
        <dbReference type="ChEBI" id="CHEBI:58689"/>
        <dbReference type="ChEBI" id="CHEBI:58818"/>
        <dbReference type="EC" id="4.2.99.20"/>
    </reaction>
</comment>
<comment type="pathway">
    <text evidence="1">Quinol/quinone metabolism; 1,4-dihydroxy-2-naphthoate biosynthesis; 1,4-dihydroxy-2-naphthoate from chorismate: step 3/7.</text>
</comment>
<comment type="pathway">
    <text evidence="1">Quinol/quinone metabolism; menaquinone biosynthesis.</text>
</comment>
<comment type="subunit">
    <text evidence="1">Monomer.</text>
</comment>
<comment type="similarity">
    <text evidence="1">Belongs to the AB hydrolase superfamily. MenH family.</text>
</comment>
<reference key="1">
    <citation type="submission" date="2007-08" db="EMBL/GenBank/DDBJ databases">
        <authorList>
            <consortium name="The Citrobacter koseri Genome Sequencing Project"/>
            <person name="McClelland M."/>
            <person name="Sanderson E.K."/>
            <person name="Porwollik S."/>
            <person name="Spieth J."/>
            <person name="Clifton W.S."/>
            <person name="Latreille P."/>
            <person name="Courtney L."/>
            <person name="Wang C."/>
            <person name="Pepin K."/>
            <person name="Bhonagiri V."/>
            <person name="Nash W."/>
            <person name="Johnson M."/>
            <person name="Thiruvilangam P."/>
            <person name="Wilson R."/>
        </authorList>
    </citation>
    <scope>NUCLEOTIDE SEQUENCE [LARGE SCALE GENOMIC DNA]</scope>
    <source>
        <strain>ATCC BAA-895 / CDC 4225-83 / SGSC4696</strain>
    </source>
</reference>
<organism>
    <name type="scientific">Citrobacter koseri (strain ATCC BAA-895 / CDC 4225-83 / SGSC4696)</name>
    <dbReference type="NCBI Taxonomy" id="290338"/>
    <lineage>
        <taxon>Bacteria</taxon>
        <taxon>Pseudomonadati</taxon>
        <taxon>Pseudomonadota</taxon>
        <taxon>Gammaproteobacteria</taxon>
        <taxon>Enterobacterales</taxon>
        <taxon>Enterobacteriaceae</taxon>
        <taxon>Citrobacter</taxon>
    </lineage>
</organism>
<gene>
    <name evidence="1" type="primary">menH</name>
    <name type="ordered locus">CKO_00527</name>
</gene>
<feature type="chain" id="PRO_0000341901" description="2-succinyl-6-hydroxy-2,4-cyclohexadiene-1-carboxylate synthase">
    <location>
        <begin position="1"/>
        <end position="252"/>
    </location>
</feature>
<accession>A8ADX0</accession>
<protein>
    <recommendedName>
        <fullName evidence="1">2-succinyl-6-hydroxy-2,4-cyclohexadiene-1-carboxylate synthase</fullName>
        <shortName evidence="1">SHCHC synthase</shortName>
        <ecNumber evidence="1">4.2.99.20</ecNumber>
    </recommendedName>
</protein>
<keyword id="KW-0456">Lyase</keyword>
<keyword id="KW-0474">Menaquinone biosynthesis</keyword>
<keyword id="KW-1185">Reference proteome</keyword>
<dbReference type="EC" id="4.2.99.20" evidence="1"/>
<dbReference type="EMBL" id="CP000822">
    <property type="protein sequence ID" value="ABV11683.1"/>
    <property type="molecule type" value="Genomic_DNA"/>
</dbReference>
<dbReference type="RefSeq" id="WP_012131508.1">
    <property type="nucleotide sequence ID" value="NC_009792.1"/>
</dbReference>
<dbReference type="SMR" id="A8ADX0"/>
<dbReference type="STRING" id="290338.CKO_00527"/>
<dbReference type="ESTHER" id="citk8-menh">
    <property type="family name" value="MenH_SHCHC"/>
</dbReference>
<dbReference type="GeneID" id="45134769"/>
<dbReference type="KEGG" id="cko:CKO_00527"/>
<dbReference type="HOGENOM" id="CLU_020336_38_2_6"/>
<dbReference type="OrthoDB" id="9808398at2"/>
<dbReference type="UniPathway" id="UPA00079"/>
<dbReference type="UniPathway" id="UPA01057">
    <property type="reaction ID" value="UER00900"/>
</dbReference>
<dbReference type="Proteomes" id="UP000008148">
    <property type="component" value="Chromosome"/>
</dbReference>
<dbReference type="GO" id="GO:0070205">
    <property type="term" value="F:2-succinyl-6-hydroxy-2,4-cyclohexadiene-1-carboxylate synthase activity"/>
    <property type="evidence" value="ECO:0007669"/>
    <property type="project" value="UniProtKB-UniRule"/>
</dbReference>
<dbReference type="GO" id="GO:0009234">
    <property type="term" value="P:menaquinone biosynthetic process"/>
    <property type="evidence" value="ECO:0007669"/>
    <property type="project" value="UniProtKB-UniRule"/>
</dbReference>
<dbReference type="Gene3D" id="3.40.50.1820">
    <property type="entry name" value="alpha/beta hydrolase"/>
    <property type="match status" value="1"/>
</dbReference>
<dbReference type="HAMAP" id="MF_01660">
    <property type="entry name" value="MenH"/>
    <property type="match status" value="1"/>
</dbReference>
<dbReference type="InterPro" id="IPR000073">
    <property type="entry name" value="AB_hydrolase_1"/>
</dbReference>
<dbReference type="InterPro" id="IPR029058">
    <property type="entry name" value="AB_hydrolase_fold"/>
</dbReference>
<dbReference type="InterPro" id="IPR022485">
    <property type="entry name" value="SHCHC_synthase_MenH"/>
</dbReference>
<dbReference type="NCBIfam" id="TIGR03695">
    <property type="entry name" value="menH_SHCHC"/>
    <property type="match status" value="1"/>
</dbReference>
<dbReference type="NCBIfam" id="NF008340">
    <property type="entry name" value="PRK11126.1"/>
    <property type="match status" value="1"/>
</dbReference>
<dbReference type="PANTHER" id="PTHR42916">
    <property type="entry name" value="2-SUCCINYL-5-ENOLPYRUVYL-6-HYDROXY-3-CYCLOHEXENE-1-CARBOXYLATE SYNTHASE"/>
    <property type="match status" value="1"/>
</dbReference>
<dbReference type="PANTHER" id="PTHR42916:SF1">
    <property type="entry name" value="PROTEIN PHYLLO, CHLOROPLASTIC"/>
    <property type="match status" value="1"/>
</dbReference>
<dbReference type="Pfam" id="PF12697">
    <property type="entry name" value="Abhydrolase_6"/>
    <property type="match status" value="1"/>
</dbReference>
<dbReference type="SUPFAM" id="SSF53474">
    <property type="entry name" value="alpha/beta-Hydrolases"/>
    <property type="match status" value="1"/>
</dbReference>
<evidence type="ECO:0000255" key="1">
    <source>
        <dbReference type="HAMAP-Rule" id="MF_01660"/>
    </source>
</evidence>
<proteinExistence type="inferred from homology"/>
<sequence>MILRAQANGGQPGSPWLVFLHGFSGDCREWQQIGEQFPDFSRLYIDLPGHGDSADIRVSGFADVCDLLRNTLFSYNILKYWLVGYSLGGRVAMMAACQTLPGFCGLVVEGGHPGLQREAERDARRRSDGRWAARFRREPLRDVFTDWYQQPVFASLDASQREALVALRSQNNGETLAAMLEATSLAVQPDLRARLNARTFPFYYLCGERDSKFRALAAELSVPCHMIRNAGHNAHRENPAGVVDSLAQILRL</sequence>